<proteinExistence type="inferred from homology"/>
<reference key="1">
    <citation type="journal article" date="1998" name="Science">
        <title>Genome sequence of the nematode C. elegans: a platform for investigating biology.</title>
        <authorList>
            <consortium name="The C. elegans sequencing consortium"/>
        </authorList>
    </citation>
    <scope>NUCLEOTIDE SEQUENCE [LARGE SCALE GENOMIC DNA]</scope>
    <source>
        <strain>Bristol N2</strain>
    </source>
</reference>
<reference key="2">
    <citation type="online journal article" date="1996" name="Worm Breeder's Gazette">
        <title>Tollish genes in C. elegans.</title>
        <authorList>
            <person name="Finelli A.L."/>
            <person name="Savage C."/>
            <person name="Cho S.H."/>
            <person name="Padgett R.W."/>
        </authorList>
        <locator>14(2):46</locator>
    </citation>
    <scope>IDENTIFICATION</scope>
</reference>
<reference key="3">
    <citation type="journal article" date="2003" name="Eur. J. Biochem.">
        <title>The astacin protein family in Caenorhabditis elegans.</title>
        <authorList>
            <person name="Moehrlen F."/>
            <person name="Hutter H."/>
            <person name="Zwilling R."/>
        </authorList>
    </citation>
    <scope>IDENTIFICATION</scope>
    <scope>NOMENCLATURE</scope>
</reference>
<organism>
    <name type="scientific">Caenorhabditis elegans</name>
    <dbReference type="NCBI Taxonomy" id="6239"/>
    <lineage>
        <taxon>Eukaryota</taxon>
        <taxon>Metazoa</taxon>
        <taxon>Ecdysozoa</taxon>
        <taxon>Nematoda</taxon>
        <taxon>Chromadorea</taxon>
        <taxon>Rhabditida</taxon>
        <taxon>Rhabditina</taxon>
        <taxon>Rhabditomorpha</taxon>
        <taxon>Rhabditoidea</taxon>
        <taxon>Rhabditidae</taxon>
        <taxon>Peloderinae</taxon>
        <taxon>Caenorhabditis</taxon>
    </lineage>
</organism>
<accession>Q22710</accession>
<comment type="function">
    <text evidence="1">Metalloprotease.</text>
</comment>
<comment type="cofactor">
    <cofactor evidence="5">
        <name>Zn(2+)</name>
        <dbReference type="ChEBI" id="CHEBI:29105"/>
    </cofactor>
    <text evidence="5">Binds 1 zinc ion per subunit.</text>
</comment>
<comment type="subcellular location">
    <subcellularLocation>
        <location evidence="6">Secreted</location>
    </subcellularLocation>
</comment>
<keyword id="KW-0165">Cleavage on pair of basic residues</keyword>
<keyword id="KW-1015">Disulfide bond</keyword>
<keyword id="KW-0245">EGF-like domain</keyword>
<keyword id="KW-0325">Glycoprotein</keyword>
<keyword id="KW-0378">Hydrolase</keyword>
<keyword id="KW-0479">Metal-binding</keyword>
<keyword id="KW-0482">Metalloprotease</keyword>
<keyword id="KW-0645">Protease</keyword>
<keyword id="KW-1185">Reference proteome</keyword>
<keyword id="KW-0964">Secreted</keyword>
<keyword id="KW-0732">Signal</keyword>
<keyword id="KW-0862">Zinc</keyword>
<keyword id="KW-0865">Zymogen</keyword>
<evidence type="ECO:0000250" key="1">
    <source>
        <dbReference type="UniProtKB" id="A8Q2D1"/>
    </source>
</evidence>
<evidence type="ECO:0000250" key="2">
    <source>
        <dbReference type="UniProtKB" id="P13497"/>
    </source>
</evidence>
<evidence type="ECO:0000255" key="3"/>
<evidence type="ECO:0000255" key="4">
    <source>
        <dbReference type="PROSITE-ProRule" id="PRU00059"/>
    </source>
</evidence>
<evidence type="ECO:0000255" key="5">
    <source>
        <dbReference type="PROSITE-ProRule" id="PRU01211"/>
    </source>
</evidence>
<evidence type="ECO:0000305" key="6"/>
<sequence>MTSSLVLILAPLALVAIGEAAFGNSSKIFEIPGLEVMASDKYPHFTTIETVSRTKVHRHRREVIAGQIYDWNSYEIPFQIWGGDYNFQSLIRRGIRMWEDSTCLRFKENQQSRDAIRYVLEKGDSCFTEYIGRNGGHQDIIIGSECAEEYVVAHETGHALGFWHTHQRPDRDRHISINWKNVMEEATASFMPFRSMLQAFGIRQVSPRRVPYDYGSLMHYHAVAHAVKVSDFTIVPKELKYVTTMGTEKMAFLDAKVINDIYCPNACQGRNHLNCLAGGYPDPNNCNVCRCPEGLGGPDCGRLQPSPCGGEIHASDQWQTLSSPSGRDVHCYWRISVPEGSRVRFRLSDGEFPCSYGCQSYVEIKHKLDVRLTGFRSCCYRPKEDTVSESNQIFVIYHPNGRTARFSLRFRRQA</sequence>
<gene>
    <name type="primary">toh-1</name>
    <name type="synonym">nas-26</name>
    <name type="ORF">T24A11.3</name>
</gene>
<feature type="signal peptide" evidence="3">
    <location>
        <begin position="1"/>
        <end position="20"/>
    </location>
</feature>
<feature type="propeptide" id="PRO_0000442673" evidence="2">
    <location>
        <begin position="21"/>
        <end position="61"/>
    </location>
</feature>
<feature type="chain" id="PRO_0000028930" description="Zinc metalloproteinase nas-26">
    <location>
        <begin position="62"/>
        <end position="414"/>
    </location>
</feature>
<feature type="domain" description="Peptidase M12A" evidence="5">
    <location>
        <begin position="62"/>
        <end position="264"/>
    </location>
</feature>
<feature type="domain" description="EGF-like">
    <location>
        <begin position="251"/>
        <end position="307"/>
    </location>
</feature>
<feature type="domain" description="CUB" evidence="4">
    <location>
        <begin position="308"/>
        <end position="414"/>
    </location>
</feature>
<feature type="active site" evidence="5">
    <location>
        <position position="155"/>
    </location>
</feature>
<feature type="binding site" evidence="5">
    <location>
        <position position="154"/>
    </location>
    <ligand>
        <name>Zn(2+)</name>
        <dbReference type="ChEBI" id="CHEBI:29105"/>
        <note>catalytic</note>
    </ligand>
</feature>
<feature type="binding site" evidence="5">
    <location>
        <position position="158"/>
    </location>
    <ligand>
        <name>Zn(2+)</name>
        <dbReference type="ChEBI" id="CHEBI:29105"/>
        <note>catalytic</note>
    </ligand>
</feature>
<feature type="binding site" evidence="5">
    <location>
        <position position="164"/>
    </location>
    <ligand>
        <name>Zn(2+)</name>
        <dbReference type="ChEBI" id="CHEBI:29105"/>
        <note>catalytic</note>
    </ligand>
</feature>
<feature type="glycosylation site" description="N-linked (GlcNAc...) asparagine" evidence="3">
    <location>
        <position position="24"/>
    </location>
</feature>
<feature type="disulfide bond" evidence="5">
    <location>
        <begin position="103"/>
        <end position="263"/>
    </location>
</feature>
<feature type="disulfide bond" evidence="5">
    <location>
        <begin position="126"/>
        <end position="146"/>
    </location>
</feature>
<feature type="disulfide bond" evidence="4">
    <location>
        <begin position="267"/>
        <end position="286"/>
    </location>
</feature>
<feature type="disulfide bond" evidence="4">
    <location>
        <begin position="289"/>
        <end position="300"/>
    </location>
</feature>
<feature type="disulfide bond" evidence="4">
    <location>
        <begin position="308"/>
        <end position="331"/>
    </location>
</feature>
<feature type="disulfide bond" evidence="4">
    <location>
        <begin position="358"/>
        <end position="378"/>
    </location>
</feature>
<protein>
    <recommendedName>
        <fullName>Zinc metalloproteinase nas-26</fullName>
        <ecNumber evidence="1">3.4.24.-</ecNumber>
    </recommendedName>
    <alternativeName>
        <fullName>Nematode astacin 26</fullName>
    </alternativeName>
    <alternativeName>
        <fullName>Tollish protein 1</fullName>
    </alternativeName>
</protein>
<dbReference type="EC" id="3.4.24.-" evidence="1"/>
<dbReference type="EMBL" id="Z49072">
    <property type="protein sequence ID" value="CAA88882.4"/>
    <property type="molecule type" value="Genomic_DNA"/>
</dbReference>
<dbReference type="PIR" id="T25213">
    <property type="entry name" value="T25213"/>
</dbReference>
<dbReference type="RefSeq" id="NP_497769.3">
    <property type="nucleotide sequence ID" value="NM_065368.5"/>
</dbReference>
<dbReference type="SMR" id="Q22710"/>
<dbReference type="STRING" id="6239.T24A11.3.1"/>
<dbReference type="MEROPS" id="M12.A17"/>
<dbReference type="GlyCosmos" id="Q22710">
    <property type="glycosylation" value="1 site, No reported glycans"/>
</dbReference>
<dbReference type="PaxDb" id="6239-T24A11.3"/>
<dbReference type="PeptideAtlas" id="Q22710"/>
<dbReference type="EnsemblMetazoa" id="T24A11.3.1">
    <property type="protein sequence ID" value="T24A11.3.1"/>
    <property type="gene ID" value="WBGene00006591"/>
</dbReference>
<dbReference type="GeneID" id="175491"/>
<dbReference type="KEGG" id="cel:CELE_T24A11.3"/>
<dbReference type="UCSC" id="T24A11.3">
    <property type="organism name" value="c. elegans"/>
</dbReference>
<dbReference type="AGR" id="WB:WBGene00006591"/>
<dbReference type="CTD" id="175491"/>
<dbReference type="WormBase" id="T24A11.3">
    <property type="protein sequence ID" value="CE35909"/>
    <property type="gene ID" value="WBGene00006591"/>
    <property type="gene designation" value="toh-1"/>
</dbReference>
<dbReference type="eggNOG" id="KOG3714">
    <property type="taxonomic scope" value="Eukaryota"/>
</dbReference>
<dbReference type="HOGENOM" id="CLU_017286_1_2_1"/>
<dbReference type="InParanoid" id="Q22710"/>
<dbReference type="OMA" id="HCYWRIS"/>
<dbReference type="OrthoDB" id="291007at2759"/>
<dbReference type="PhylomeDB" id="Q22710"/>
<dbReference type="PRO" id="PR:Q22710"/>
<dbReference type="Proteomes" id="UP000001940">
    <property type="component" value="Chromosome III"/>
</dbReference>
<dbReference type="Bgee" id="WBGene00006591">
    <property type="expression patterns" value="Expressed in larva and 3 other cell types or tissues"/>
</dbReference>
<dbReference type="GO" id="GO:0005576">
    <property type="term" value="C:extracellular region"/>
    <property type="evidence" value="ECO:0007669"/>
    <property type="project" value="UniProtKB-SubCell"/>
</dbReference>
<dbReference type="GO" id="GO:0004222">
    <property type="term" value="F:metalloendopeptidase activity"/>
    <property type="evidence" value="ECO:0000318"/>
    <property type="project" value="GO_Central"/>
</dbReference>
<dbReference type="GO" id="GO:0008270">
    <property type="term" value="F:zinc ion binding"/>
    <property type="evidence" value="ECO:0007669"/>
    <property type="project" value="InterPro"/>
</dbReference>
<dbReference type="GO" id="GO:0018996">
    <property type="term" value="P:molting cycle, collagen and cuticulin-based cuticle"/>
    <property type="evidence" value="ECO:0007669"/>
    <property type="project" value="InterPro"/>
</dbReference>
<dbReference type="GO" id="GO:0006508">
    <property type="term" value="P:proteolysis"/>
    <property type="evidence" value="ECO:0007669"/>
    <property type="project" value="UniProtKB-KW"/>
</dbReference>
<dbReference type="CDD" id="cd00041">
    <property type="entry name" value="CUB"/>
    <property type="match status" value="1"/>
</dbReference>
<dbReference type="CDD" id="cd04280">
    <property type="entry name" value="ZnMc_astacin_like"/>
    <property type="match status" value="1"/>
</dbReference>
<dbReference type="FunFam" id="2.60.120.290:FF:000071">
    <property type="entry name" value="Zinc metalloproteinase"/>
    <property type="match status" value="1"/>
</dbReference>
<dbReference type="FunFam" id="3.40.390.10:FF:000085">
    <property type="entry name" value="Zinc metalloproteinase"/>
    <property type="match status" value="1"/>
</dbReference>
<dbReference type="Gene3D" id="3.40.390.10">
    <property type="entry name" value="Collagenase (Catalytic Domain)"/>
    <property type="match status" value="1"/>
</dbReference>
<dbReference type="Gene3D" id="2.60.120.290">
    <property type="entry name" value="Spermadhesin, CUB domain"/>
    <property type="match status" value="1"/>
</dbReference>
<dbReference type="InterPro" id="IPR034035">
    <property type="entry name" value="Astacin-like_dom"/>
</dbReference>
<dbReference type="InterPro" id="IPR000859">
    <property type="entry name" value="CUB_dom"/>
</dbReference>
<dbReference type="InterPro" id="IPR024079">
    <property type="entry name" value="MetalloPept_cat_dom_sf"/>
</dbReference>
<dbReference type="InterPro" id="IPR017050">
    <property type="entry name" value="Metallopeptidase_nem"/>
</dbReference>
<dbReference type="InterPro" id="IPR001506">
    <property type="entry name" value="Peptidase_M12A"/>
</dbReference>
<dbReference type="InterPro" id="IPR006026">
    <property type="entry name" value="Peptidase_Metallo"/>
</dbReference>
<dbReference type="InterPro" id="IPR035914">
    <property type="entry name" value="Sperma_CUB_dom_sf"/>
</dbReference>
<dbReference type="PANTHER" id="PTHR10127">
    <property type="entry name" value="DISCOIDIN, CUB, EGF, LAMININ , AND ZINC METALLOPROTEASE DOMAIN CONTAINING"/>
    <property type="match status" value="1"/>
</dbReference>
<dbReference type="PANTHER" id="PTHR10127:SF819">
    <property type="entry name" value="ZINC METALLOPROTEINASE NAS-26"/>
    <property type="match status" value="1"/>
</dbReference>
<dbReference type="Pfam" id="PF01400">
    <property type="entry name" value="Astacin"/>
    <property type="match status" value="1"/>
</dbReference>
<dbReference type="Pfam" id="PF00431">
    <property type="entry name" value="CUB"/>
    <property type="match status" value="1"/>
</dbReference>
<dbReference type="PIRSF" id="PIRSF036365">
    <property type="entry name" value="Astacin_nematoda"/>
    <property type="match status" value="1"/>
</dbReference>
<dbReference type="PRINTS" id="PR00480">
    <property type="entry name" value="ASTACIN"/>
</dbReference>
<dbReference type="SMART" id="SM00042">
    <property type="entry name" value="CUB"/>
    <property type="match status" value="1"/>
</dbReference>
<dbReference type="SMART" id="SM00235">
    <property type="entry name" value="ZnMc"/>
    <property type="match status" value="1"/>
</dbReference>
<dbReference type="SUPFAM" id="SSF55486">
    <property type="entry name" value="Metalloproteases ('zincins'), catalytic domain"/>
    <property type="match status" value="1"/>
</dbReference>
<dbReference type="SUPFAM" id="SSF49854">
    <property type="entry name" value="Spermadhesin, CUB domain"/>
    <property type="match status" value="1"/>
</dbReference>
<dbReference type="PROSITE" id="PS51864">
    <property type="entry name" value="ASTACIN"/>
    <property type="match status" value="1"/>
</dbReference>
<dbReference type="PROSITE" id="PS01180">
    <property type="entry name" value="CUB"/>
    <property type="match status" value="1"/>
</dbReference>
<dbReference type="PROSITE" id="PS00022">
    <property type="entry name" value="EGF_1"/>
    <property type="match status" value="1"/>
</dbReference>
<name>NAS26_CAEEL</name>